<feature type="chain" id="PRO_0000354476" description="Large ribosomal subunit protein uL22">
    <location>
        <begin position="1"/>
        <end position="135"/>
    </location>
</feature>
<gene>
    <name evidence="1" type="primary">rplV</name>
    <name type="ordered locus">GFO_2834</name>
</gene>
<dbReference type="EMBL" id="CU207366">
    <property type="protein sequence ID" value="CAL67788.1"/>
    <property type="molecule type" value="Genomic_DNA"/>
</dbReference>
<dbReference type="RefSeq" id="WP_011710691.1">
    <property type="nucleotide sequence ID" value="NC_008571.1"/>
</dbReference>
<dbReference type="SMR" id="A0M593"/>
<dbReference type="STRING" id="411154.GFO_2834"/>
<dbReference type="KEGG" id="gfo:GFO_2834"/>
<dbReference type="eggNOG" id="COG0091">
    <property type="taxonomic scope" value="Bacteria"/>
</dbReference>
<dbReference type="HOGENOM" id="CLU_083987_3_1_10"/>
<dbReference type="OrthoDB" id="9805969at2"/>
<dbReference type="Proteomes" id="UP000000755">
    <property type="component" value="Chromosome"/>
</dbReference>
<dbReference type="GO" id="GO:0022625">
    <property type="term" value="C:cytosolic large ribosomal subunit"/>
    <property type="evidence" value="ECO:0007669"/>
    <property type="project" value="TreeGrafter"/>
</dbReference>
<dbReference type="GO" id="GO:0019843">
    <property type="term" value="F:rRNA binding"/>
    <property type="evidence" value="ECO:0007669"/>
    <property type="project" value="UniProtKB-UniRule"/>
</dbReference>
<dbReference type="GO" id="GO:0003735">
    <property type="term" value="F:structural constituent of ribosome"/>
    <property type="evidence" value="ECO:0007669"/>
    <property type="project" value="InterPro"/>
</dbReference>
<dbReference type="GO" id="GO:0006412">
    <property type="term" value="P:translation"/>
    <property type="evidence" value="ECO:0007669"/>
    <property type="project" value="UniProtKB-UniRule"/>
</dbReference>
<dbReference type="CDD" id="cd00336">
    <property type="entry name" value="Ribosomal_L22"/>
    <property type="match status" value="1"/>
</dbReference>
<dbReference type="Gene3D" id="3.90.470.10">
    <property type="entry name" value="Ribosomal protein L22/L17"/>
    <property type="match status" value="1"/>
</dbReference>
<dbReference type="HAMAP" id="MF_01331_B">
    <property type="entry name" value="Ribosomal_uL22_B"/>
    <property type="match status" value="1"/>
</dbReference>
<dbReference type="InterPro" id="IPR001063">
    <property type="entry name" value="Ribosomal_uL22"/>
</dbReference>
<dbReference type="InterPro" id="IPR005727">
    <property type="entry name" value="Ribosomal_uL22_bac/chlpt-type"/>
</dbReference>
<dbReference type="InterPro" id="IPR047867">
    <property type="entry name" value="Ribosomal_uL22_bac/org-type"/>
</dbReference>
<dbReference type="InterPro" id="IPR036394">
    <property type="entry name" value="Ribosomal_uL22_sf"/>
</dbReference>
<dbReference type="NCBIfam" id="TIGR01044">
    <property type="entry name" value="rplV_bact"/>
    <property type="match status" value="1"/>
</dbReference>
<dbReference type="PANTHER" id="PTHR13501">
    <property type="entry name" value="CHLOROPLAST 50S RIBOSOMAL PROTEIN L22-RELATED"/>
    <property type="match status" value="1"/>
</dbReference>
<dbReference type="PANTHER" id="PTHR13501:SF8">
    <property type="entry name" value="LARGE RIBOSOMAL SUBUNIT PROTEIN UL22M"/>
    <property type="match status" value="1"/>
</dbReference>
<dbReference type="Pfam" id="PF00237">
    <property type="entry name" value="Ribosomal_L22"/>
    <property type="match status" value="1"/>
</dbReference>
<dbReference type="SUPFAM" id="SSF54843">
    <property type="entry name" value="Ribosomal protein L22"/>
    <property type="match status" value="1"/>
</dbReference>
<name>RL22_CHRFK</name>
<sequence length="135" mass="15351">MGVRKRERAEQIKEAKKQVAFAKLNNCPTSPRKMRLMADLVRGEKVEKALHILKFSKKEASNRLEKLLVSAIANWQAKNEDANLEEAELFVKEIRVDGGSMLKRLRPAPQGRAHRIRKRSNHVTLVLGANNNTQS</sequence>
<protein>
    <recommendedName>
        <fullName evidence="1">Large ribosomal subunit protein uL22</fullName>
    </recommendedName>
    <alternativeName>
        <fullName evidence="2">50S ribosomal protein L22</fullName>
    </alternativeName>
</protein>
<proteinExistence type="inferred from homology"/>
<keyword id="KW-0687">Ribonucleoprotein</keyword>
<keyword id="KW-0689">Ribosomal protein</keyword>
<keyword id="KW-0694">RNA-binding</keyword>
<keyword id="KW-0699">rRNA-binding</keyword>
<reference key="1">
    <citation type="journal article" date="2006" name="Environ. Microbiol.">
        <title>Whole genome analysis of the marine Bacteroidetes'Gramella forsetii' reveals adaptations to degradation of polymeric organic matter.</title>
        <authorList>
            <person name="Bauer M."/>
            <person name="Kube M."/>
            <person name="Teeling H."/>
            <person name="Richter M."/>
            <person name="Lombardot T."/>
            <person name="Allers E."/>
            <person name="Wuerdemann C.A."/>
            <person name="Quast C."/>
            <person name="Kuhl H."/>
            <person name="Knaust F."/>
            <person name="Woebken D."/>
            <person name="Bischof K."/>
            <person name="Mussmann M."/>
            <person name="Choudhuri J.V."/>
            <person name="Meyer F."/>
            <person name="Reinhardt R."/>
            <person name="Amann R.I."/>
            <person name="Gloeckner F.O."/>
        </authorList>
    </citation>
    <scope>NUCLEOTIDE SEQUENCE [LARGE SCALE GENOMIC DNA]</scope>
    <source>
        <strain>DSM 17595 / CGMCC 1.15422 / KT0803</strain>
    </source>
</reference>
<evidence type="ECO:0000255" key="1">
    <source>
        <dbReference type="HAMAP-Rule" id="MF_01331"/>
    </source>
</evidence>
<evidence type="ECO:0000305" key="2"/>
<organism>
    <name type="scientific">Christiangramia forsetii (strain DSM 17595 / CGMCC 1.15422 / KT0803)</name>
    <name type="common">Gramella forsetii</name>
    <dbReference type="NCBI Taxonomy" id="411154"/>
    <lineage>
        <taxon>Bacteria</taxon>
        <taxon>Pseudomonadati</taxon>
        <taxon>Bacteroidota</taxon>
        <taxon>Flavobacteriia</taxon>
        <taxon>Flavobacteriales</taxon>
        <taxon>Flavobacteriaceae</taxon>
        <taxon>Christiangramia</taxon>
    </lineage>
</organism>
<accession>A0M593</accession>
<comment type="function">
    <text evidence="1">This protein binds specifically to 23S rRNA; its binding is stimulated by other ribosomal proteins, e.g. L4, L17, and L20. It is important during the early stages of 50S assembly. It makes multiple contacts with different domains of the 23S rRNA in the assembled 50S subunit and ribosome (By similarity).</text>
</comment>
<comment type="function">
    <text evidence="1">The globular domain of the protein is located near the polypeptide exit tunnel on the outside of the subunit, while an extended beta-hairpin is found that lines the wall of the exit tunnel in the center of the 70S ribosome.</text>
</comment>
<comment type="subunit">
    <text evidence="1">Part of the 50S ribosomal subunit.</text>
</comment>
<comment type="similarity">
    <text evidence="1">Belongs to the universal ribosomal protein uL22 family.</text>
</comment>